<proteinExistence type="inferred from homology"/>
<protein>
    <recommendedName>
        <fullName evidence="1">Ribosomal RNA large subunit methyltransferase M</fullName>
        <ecNumber evidence="1">2.1.1.186</ecNumber>
    </recommendedName>
    <alternativeName>
        <fullName evidence="1">23S rRNA (cytidine2498-2'-O)-methyltransferase</fullName>
    </alternativeName>
    <alternativeName>
        <fullName evidence="1">23S rRNA 2'-O-ribose methyltransferase RlmM</fullName>
    </alternativeName>
</protein>
<gene>
    <name evidence="1" type="primary">rlmM</name>
    <name type="ordered locus">Spea_2981</name>
</gene>
<evidence type="ECO:0000255" key="1">
    <source>
        <dbReference type="HAMAP-Rule" id="MF_01551"/>
    </source>
</evidence>
<comment type="function">
    <text evidence="1">Catalyzes the 2'-O-methylation at nucleotide C2498 in 23S rRNA.</text>
</comment>
<comment type="catalytic activity">
    <reaction evidence="1">
        <text>cytidine(2498) in 23S rRNA + S-adenosyl-L-methionine = 2'-O-methylcytidine(2498) in 23S rRNA + S-adenosyl-L-homocysteine + H(+)</text>
        <dbReference type="Rhea" id="RHEA:42788"/>
        <dbReference type="Rhea" id="RHEA-COMP:10244"/>
        <dbReference type="Rhea" id="RHEA-COMP:10245"/>
        <dbReference type="ChEBI" id="CHEBI:15378"/>
        <dbReference type="ChEBI" id="CHEBI:57856"/>
        <dbReference type="ChEBI" id="CHEBI:59789"/>
        <dbReference type="ChEBI" id="CHEBI:74495"/>
        <dbReference type="ChEBI" id="CHEBI:82748"/>
        <dbReference type="EC" id="2.1.1.186"/>
    </reaction>
</comment>
<comment type="subunit">
    <text evidence="1">Monomer.</text>
</comment>
<comment type="subcellular location">
    <subcellularLocation>
        <location evidence="1">Cytoplasm</location>
    </subcellularLocation>
</comment>
<comment type="similarity">
    <text evidence="1">Belongs to the class I-like SAM-binding methyltransferase superfamily. RNA methyltransferase RlmE family. RlmM subfamily.</text>
</comment>
<sequence>MINLFLFCRAGYEKDCAAEIQVRAAELDIGGFVKTNTNDAYVIFQCFQAGDAEVLAKNISLDSLIFARQMFAAKELLKGLPEQDRISPIVEALTQVNKAGELRVETPDTNEAKERSNFCRKFTVPLRQALKKSGALLEKENPKRPIIHVCFVASGQAYVGYSLSNNSSPYFMGIPRLKIAADAPSRSTLKLDEAFIHFIPKEEQETRLSSGMKAVDLGACPGGWTYQLVRRGMFVAAVDNGPMDQGLMDTGQVKHYQADGFRFEPPRKNITWLVCDMIEKPSRVAELIEAWAINGWFKESIFNLKLPMKARYKEVSTILATMEEILKENGVDDFSIAAKHLYHDRDEVTVHLCLRPSQPW</sequence>
<feature type="chain" id="PRO_1000087741" description="Ribosomal RNA large subunit methyltransferase M">
    <location>
        <begin position="1"/>
        <end position="360"/>
    </location>
</feature>
<feature type="active site" description="Proton acceptor" evidence="1">
    <location>
        <position position="305"/>
    </location>
</feature>
<feature type="binding site" evidence="1">
    <location>
        <position position="187"/>
    </location>
    <ligand>
        <name>S-adenosyl-L-methionine</name>
        <dbReference type="ChEBI" id="CHEBI:59789"/>
    </ligand>
</feature>
<feature type="binding site" evidence="1">
    <location>
        <begin position="220"/>
        <end position="223"/>
    </location>
    <ligand>
        <name>S-adenosyl-L-methionine</name>
        <dbReference type="ChEBI" id="CHEBI:59789"/>
    </ligand>
</feature>
<feature type="binding site" evidence="1">
    <location>
        <position position="239"/>
    </location>
    <ligand>
        <name>S-adenosyl-L-methionine</name>
        <dbReference type="ChEBI" id="CHEBI:59789"/>
    </ligand>
</feature>
<feature type="binding site" evidence="1">
    <location>
        <position position="259"/>
    </location>
    <ligand>
        <name>S-adenosyl-L-methionine</name>
        <dbReference type="ChEBI" id="CHEBI:59789"/>
    </ligand>
</feature>
<feature type="binding site" evidence="1">
    <location>
        <position position="276"/>
    </location>
    <ligand>
        <name>S-adenosyl-L-methionine</name>
        <dbReference type="ChEBI" id="CHEBI:59789"/>
    </ligand>
</feature>
<keyword id="KW-0963">Cytoplasm</keyword>
<keyword id="KW-0489">Methyltransferase</keyword>
<keyword id="KW-1185">Reference proteome</keyword>
<keyword id="KW-0698">rRNA processing</keyword>
<keyword id="KW-0949">S-adenosyl-L-methionine</keyword>
<keyword id="KW-0808">Transferase</keyword>
<name>RLMM_SHEPA</name>
<accession>A8H6W1</accession>
<organism>
    <name type="scientific">Shewanella pealeana (strain ATCC 700345 / ANG-SQ1)</name>
    <dbReference type="NCBI Taxonomy" id="398579"/>
    <lineage>
        <taxon>Bacteria</taxon>
        <taxon>Pseudomonadati</taxon>
        <taxon>Pseudomonadota</taxon>
        <taxon>Gammaproteobacteria</taxon>
        <taxon>Alteromonadales</taxon>
        <taxon>Shewanellaceae</taxon>
        <taxon>Shewanella</taxon>
    </lineage>
</organism>
<dbReference type="EC" id="2.1.1.186" evidence="1"/>
<dbReference type="EMBL" id="CP000851">
    <property type="protein sequence ID" value="ABV88298.1"/>
    <property type="molecule type" value="Genomic_DNA"/>
</dbReference>
<dbReference type="RefSeq" id="WP_012156202.1">
    <property type="nucleotide sequence ID" value="NC_009901.1"/>
</dbReference>
<dbReference type="SMR" id="A8H6W1"/>
<dbReference type="STRING" id="398579.Spea_2981"/>
<dbReference type="KEGG" id="spl:Spea_2981"/>
<dbReference type="eggNOG" id="COG2933">
    <property type="taxonomic scope" value="Bacteria"/>
</dbReference>
<dbReference type="HOGENOM" id="CLU_043780_0_0_6"/>
<dbReference type="OrthoDB" id="154490at2"/>
<dbReference type="Proteomes" id="UP000002608">
    <property type="component" value="Chromosome"/>
</dbReference>
<dbReference type="GO" id="GO:0005737">
    <property type="term" value="C:cytoplasm"/>
    <property type="evidence" value="ECO:0007669"/>
    <property type="project" value="UniProtKB-SubCell"/>
</dbReference>
<dbReference type="GO" id="GO:0008757">
    <property type="term" value="F:S-adenosylmethionine-dependent methyltransferase activity"/>
    <property type="evidence" value="ECO:0007669"/>
    <property type="project" value="UniProtKB-UniRule"/>
</dbReference>
<dbReference type="GO" id="GO:0032259">
    <property type="term" value="P:methylation"/>
    <property type="evidence" value="ECO:0007669"/>
    <property type="project" value="UniProtKB-KW"/>
</dbReference>
<dbReference type="GO" id="GO:0006364">
    <property type="term" value="P:rRNA processing"/>
    <property type="evidence" value="ECO:0007669"/>
    <property type="project" value="UniProtKB-UniRule"/>
</dbReference>
<dbReference type="Gene3D" id="3.30.2300.20">
    <property type="match status" value="1"/>
</dbReference>
<dbReference type="Gene3D" id="3.30.70.2810">
    <property type="match status" value="1"/>
</dbReference>
<dbReference type="Gene3D" id="3.40.50.150">
    <property type="entry name" value="Vaccinia Virus protein VP39"/>
    <property type="match status" value="1"/>
</dbReference>
<dbReference type="HAMAP" id="MF_01551">
    <property type="entry name" value="23SrRNA_methyltr_M"/>
    <property type="match status" value="1"/>
</dbReference>
<dbReference type="InterPro" id="IPR040739">
    <property type="entry name" value="RlmM_FDX"/>
</dbReference>
<dbReference type="InterPro" id="IPR048646">
    <property type="entry name" value="RlmM_THUMP-like"/>
</dbReference>
<dbReference type="InterPro" id="IPR002877">
    <property type="entry name" value="RNA_MeTrfase_FtsJ_dom"/>
</dbReference>
<dbReference type="InterPro" id="IPR011224">
    <property type="entry name" value="rRNA_MeTrfase_M"/>
</dbReference>
<dbReference type="InterPro" id="IPR029063">
    <property type="entry name" value="SAM-dependent_MTases_sf"/>
</dbReference>
<dbReference type="NCBIfam" id="NF008734">
    <property type="entry name" value="PRK11760.1"/>
    <property type="match status" value="1"/>
</dbReference>
<dbReference type="PANTHER" id="PTHR37524">
    <property type="entry name" value="RIBOSOMAL RNA LARGE SUBUNIT METHYLTRANSFERASE M"/>
    <property type="match status" value="1"/>
</dbReference>
<dbReference type="PANTHER" id="PTHR37524:SF2">
    <property type="entry name" value="RIBOSOMAL RNA METHYLTRANSFERASE FTSJ DOMAIN-CONTAINING PROTEIN"/>
    <property type="match status" value="1"/>
</dbReference>
<dbReference type="Pfam" id="PF01728">
    <property type="entry name" value="FtsJ"/>
    <property type="match status" value="1"/>
</dbReference>
<dbReference type="Pfam" id="PF18125">
    <property type="entry name" value="RlmM_FDX"/>
    <property type="match status" value="1"/>
</dbReference>
<dbReference type="Pfam" id="PF21239">
    <property type="entry name" value="RLMM_N"/>
    <property type="match status" value="1"/>
</dbReference>
<dbReference type="PIRSF" id="PIRSF028774">
    <property type="entry name" value="UCP028774"/>
    <property type="match status" value="1"/>
</dbReference>
<dbReference type="SUPFAM" id="SSF53335">
    <property type="entry name" value="S-adenosyl-L-methionine-dependent methyltransferases"/>
    <property type="match status" value="1"/>
</dbReference>
<reference key="1">
    <citation type="submission" date="2007-10" db="EMBL/GenBank/DDBJ databases">
        <title>Complete sequence of Shewanella pealeana ATCC 700345.</title>
        <authorList>
            <consortium name="US DOE Joint Genome Institute"/>
            <person name="Copeland A."/>
            <person name="Lucas S."/>
            <person name="Lapidus A."/>
            <person name="Barry K."/>
            <person name="Glavina del Rio T."/>
            <person name="Dalin E."/>
            <person name="Tice H."/>
            <person name="Pitluck S."/>
            <person name="Chertkov O."/>
            <person name="Brettin T."/>
            <person name="Bruce D."/>
            <person name="Detter J.C."/>
            <person name="Han C."/>
            <person name="Schmutz J."/>
            <person name="Larimer F."/>
            <person name="Land M."/>
            <person name="Hauser L."/>
            <person name="Kyrpides N."/>
            <person name="Kim E."/>
            <person name="Zhao J.-S.Z."/>
            <person name="Manno D."/>
            <person name="Hawari J."/>
            <person name="Richardson P."/>
        </authorList>
    </citation>
    <scope>NUCLEOTIDE SEQUENCE [LARGE SCALE GENOMIC DNA]</scope>
    <source>
        <strain>ATCC 700345 / ANG-SQ1</strain>
    </source>
</reference>